<evidence type="ECO:0000255" key="1">
    <source>
        <dbReference type="HAMAP-Rule" id="MF_01088"/>
    </source>
</evidence>
<dbReference type="EMBL" id="CP000038">
    <property type="protein sequence ID" value="AAZ90275.1"/>
    <property type="molecule type" value="Genomic_DNA"/>
</dbReference>
<dbReference type="RefSeq" id="WP_000626187.1">
    <property type="nucleotide sequence ID" value="NC_007384.1"/>
</dbReference>
<dbReference type="SMR" id="Q3YW37"/>
<dbReference type="GeneID" id="93778499"/>
<dbReference type="KEGG" id="ssn:SSON_3729"/>
<dbReference type="HOGENOM" id="CLU_151816_0_0_6"/>
<dbReference type="Proteomes" id="UP000002529">
    <property type="component" value="Chromosome"/>
</dbReference>
<dbReference type="GO" id="GO:0005886">
    <property type="term" value="C:plasma membrane"/>
    <property type="evidence" value="ECO:0007669"/>
    <property type="project" value="UniProtKB-SubCell"/>
</dbReference>
<dbReference type="HAMAP" id="MF_01088">
    <property type="entry name" value="UspB"/>
    <property type="match status" value="1"/>
</dbReference>
<dbReference type="InterPro" id="IPR019598">
    <property type="entry name" value="Universal_stress_protein_B"/>
</dbReference>
<dbReference type="NCBIfam" id="NF003435">
    <property type="entry name" value="PRK04960.1"/>
    <property type="match status" value="1"/>
</dbReference>
<dbReference type="Pfam" id="PF10625">
    <property type="entry name" value="UspB"/>
    <property type="match status" value="1"/>
</dbReference>
<proteinExistence type="inferred from homology"/>
<reference key="1">
    <citation type="journal article" date="2005" name="Nucleic Acids Res.">
        <title>Genome dynamics and diversity of Shigella species, the etiologic agents of bacillary dysentery.</title>
        <authorList>
            <person name="Yang F."/>
            <person name="Yang J."/>
            <person name="Zhang X."/>
            <person name="Chen L."/>
            <person name="Jiang Y."/>
            <person name="Yan Y."/>
            <person name="Tang X."/>
            <person name="Wang J."/>
            <person name="Xiong Z."/>
            <person name="Dong J."/>
            <person name="Xue Y."/>
            <person name="Zhu Y."/>
            <person name="Xu X."/>
            <person name="Sun L."/>
            <person name="Chen S."/>
            <person name="Nie H."/>
            <person name="Peng J."/>
            <person name="Xu J."/>
            <person name="Wang Y."/>
            <person name="Yuan Z."/>
            <person name="Wen Y."/>
            <person name="Yao Z."/>
            <person name="Shen Y."/>
            <person name="Qiang B."/>
            <person name="Hou Y."/>
            <person name="Yu J."/>
            <person name="Jin Q."/>
        </authorList>
    </citation>
    <scope>NUCLEOTIDE SEQUENCE [LARGE SCALE GENOMIC DNA]</scope>
    <source>
        <strain>Ss046</strain>
    </source>
</reference>
<keyword id="KW-0997">Cell inner membrane</keyword>
<keyword id="KW-1003">Cell membrane</keyword>
<keyword id="KW-0472">Membrane</keyword>
<keyword id="KW-1185">Reference proteome</keyword>
<keyword id="KW-0812">Transmembrane</keyword>
<keyword id="KW-1133">Transmembrane helix</keyword>
<gene>
    <name evidence="1" type="primary">uspB</name>
    <name type="ordered locus">SSON_3729</name>
</gene>
<accession>Q3YW37</accession>
<protein>
    <recommendedName>
        <fullName evidence="1">Universal stress protein B</fullName>
    </recommendedName>
</protein>
<feature type="chain" id="PRO_1000064882" description="Universal stress protein B">
    <location>
        <begin position="1"/>
        <end position="111"/>
    </location>
</feature>
<feature type="transmembrane region" description="Helical" evidence="1">
    <location>
        <begin position="1"/>
        <end position="21"/>
    </location>
</feature>
<feature type="transmembrane region" description="Helical" evidence="1">
    <location>
        <begin position="90"/>
        <end position="110"/>
    </location>
</feature>
<sequence length="111" mass="13027">MISTVALFWALCVVCIVNMARYFSSLRALLVVLRNCDPLLYQYVDGGGFFTSHGQPNKQVRLVWYIYAQRYRDHHDDEFIRRCERVRRQFILTSALCGLVVVSLIALMIWH</sequence>
<comment type="subcellular location">
    <subcellularLocation>
        <location evidence="1">Cell inner membrane</location>
        <topology evidence="1">Multi-pass membrane protein</topology>
    </subcellularLocation>
</comment>
<comment type="similarity">
    <text evidence="1">Belongs to the universal stress protein B family.</text>
</comment>
<name>USPB_SHISS</name>
<organism>
    <name type="scientific">Shigella sonnei (strain Ss046)</name>
    <dbReference type="NCBI Taxonomy" id="300269"/>
    <lineage>
        <taxon>Bacteria</taxon>
        <taxon>Pseudomonadati</taxon>
        <taxon>Pseudomonadota</taxon>
        <taxon>Gammaproteobacteria</taxon>
        <taxon>Enterobacterales</taxon>
        <taxon>Enterobacteriaceae</taxon>
        <taxon>Shigella</taxon>
    </lineage>
</organism>